<keyword id="KW-0027">Amidation</keyword>
<keyword id="KW-0903">Direct protein sequencing</keyword>
<keyword id="KW-0527">Neuropeptide</keyword>
<keyword id="KW-0964">Secreted</keyword>
<name>ALL16_CARMA</name>
<reference key="1">
    <citation type="journal article" date="1997" name="Eur. J. Biochem.">
        <title>Isolation and identification of multiple neuropeptides of the allatostatin superfamily in the shore crab Carcinus maenas.</title>
        <authorList>
            <person name="Duve H."/>
            <person name="Johnsen A.H."/>
            <person name="Maestro J.-L."/>
            <person name="Scott A.G."/>
            <person name="Jaros P.P."/>
            <person name="Thorpe A."/>
        </authorList>
    </citation>
    <scope>PROTEIN SEQUENCE</scope>
    <scope>AMIDATION AT LEU-8</scope>
    <source>
        <tissue>Cerebral ganglion</tissue>
        <tissue>Thoracic ganglion</tissue>
    </source>
</reference>
<proteinExistence type="evidence at protein level"/>
<dbReference type="GO" id="GO:0005576">
    <property type="term" value="C:extracellular region"/>
    <property type="evidence" value="ECO:0007669"/>
    <property type="project" value="UniProtKB-SubCell"/>
</dbReference>
<dbReference type="GO" id="GO:0007218">
    <property type="term" value="P:neuropeptide signaling pathway"/>
    <property type="evidence" value="ECO:0007669"/>
    <property type="project" value="UniProtKB-KW"/>
</dbReference>
<organism>
    <name type="scientific">Carcinus maenas</name>
    <name type="common">Common shore crab</name>
    <name type="synonym">Green crab</name>
    <dbReference type="NCBI Taxonomy" id="6759"/>
    <lineage>
        <taxon>Eukaryota</taxon>
        <taxon>Metazoa</taxon>
        <taxon>Ecdysozoa</taxon>
        <taxon>Arthropoda</taxon>
        <taxon>Crustacea</taxon>
        <taxon>Multicrustacea</taxon>
        <taxon>Malacostraca</taxon>
        <taxon>Eumalacostraca</taxon>
        <taxon>Eucarida</taxon>
        <taxon>Decapoda</taxon>
        <taxon>Pleocyemata</taxon>
        <taxon>Brachyura</taxon>
        <taxon>Eubrachyura</taxon>
        <taxon>Portunoidea</taxon>
        <taxon>Carcinidae</taxon>
        <taxon>Carcinus</taxon>
    </lineage>
</organism>
<comment type="function">
    <text>May act as a neurotransmitter or neuromodulator.</text>
</comment>
<comment type="subcellular location">
    <subcellularLocation>
        <location>Secreted</location>
    </subcellularLocation>
</comment>
<comment type="similarity">
    <text evidence="2">Belongs to the allatostatin family.</text>
</comment>
<accession>P81819</accession>
<evidence type="ECO:0000269" key="1">
    <source>
    </source>
</evidence>
<evidence type="ECO:0000305" key="2"/>
<sequence length="8" mass="813">GGPYSYGL</sequence>
<protein>
    <recommendedName>
        <fullName>Carcinustatin-16</fullName>
    </recommendedName>
</protein>
<feature type="peptide" id="PRO_0000043471" description="Carcinustatin-16">
    <location>
        <begin position="1"/>
        <end position="8"/>
    </location>
</feature>
<feature type="modified residue" description="Leucine amide" evidence="1">
    <location>
        <position position="8"/>
    </location>
</feature>